<gene>
    <name type="ORF">DDB_G0277057</name>
</gene>
<keyword id="KW-1185">Reference proteome</keyword>
<name>Y7886_DICDI</name>
<evidence type="ECO:0000256" key="1">
    <source>
        <dbReference type="SAM" id="MobiDB-lite"/>
    </source>
</evidence>
<proteinExistence type="predicted"/>
<organism>
    <name type="scientific">Dictyostelium discoideum</name>
    <name type="common">Social amoeba</name>
    <dbReference type="NCBI Taxonomy" id="44689"/>
    <lineage>
        <taxon>Eukaryota</taxon>
        <taxon>Amoebozoa</taxon>
        <taxon>Evosea</taxon>
        <taxon>Eumycetozoa</taxon>
        <taxon>Dictyostelia</taxon>
        <taxon>Dictyosteliales</taxon>
        <taxon>Dictyosteliaceae</taxon>
        <taxon>Dictyostelium</taxon>
    </lineage>
</organism>
<feature type="chain" id="PRO_0000348145" description="Putative uncharacterized protein DDB_G0277057">
    <location>
        <begin position="1"/>
        <end position="79"/>
    </location>
</feature>
<feature type="region of interest" description="Disordered" evidence="1">
    <location>
        <begin position="22"/>
        <end position="79"/>
    </location>
</feature>
<feature type="compositionally biased region" description="Low complexity" evidence="1">
    <location>
        <begin position="22"/>
        <end position="72"/>
    </location>
</feature>
<sequence length="79" mass="9130">MCGGPNKWYIFLIGLVNINNNNNNNNNNNNNNNNNNNNNNNNNNNNNNNNNNNNNNNNNNNNNNNNNNNNNNKRFFFFG</sequence>
<dbReference type="EMBL" id="AAFI02000019">
    <property type="protein sequence ID" value="EAL69030.1"/>
    <property type="molecule type" value="Genomic_DNA"/>
</dbReference>
<dbReference type="RefSeq" id="XP_642899.1">
    <property type="nucleotide sequence ID" value="XM_637807.1"/>
</dbReference>
<dbReference type="PaxDb" id="44689-DDB0217886"/>
<dbReference type="EnsemblProtists" id="EAL69030">
    <property type="protein sequence ID" value="EAL69030"/>
    <property type="gene ID" value="DDB_G0277057"/>
</dbReference>
<dbReference type="GeneID" id="8620765"/>
<dbReference type="KEGG" id="ddi:DDB_G0277057"/>
<dbReference type="dictyBase" id="DDB_G0277057"/>
<dbReference type="HOGENOM" id="CLU_2611031_0_0_1"/>
<dbReference type="InParanoid" id="Q7KWP3"/>
<dbReference type="OMA" id="WYIFLIG"/>
<dbReference type="PRO" id="PR:Q7KWP3"/>
<dbReference type="Proteomes" id="UP000002195">
    <property type="component" value="Chromosome 2"/>
</dbReference>
<accession>Q7KWP3</accession>
<accession>Q550N3</accession>
<reference key="1">
    <citation type="journal article" date="2002" name="Nature">
        <title>Sequence and analysis of chromosome 2 of Dictyostelium discoideum.</title>
        <authorList>
            <person name="Gloeckner G."/>
            <person name="Eichinger L."/>
            <person name="Szafranski K."/>
            <person name="Pachebat J.A."/>
            <person name="Bankier A.T."/>
            <person name="Dear P.H."/>
            <person name="Lehmann R."/>
            <person name="Baumgart C."/>
            <person name="Parra G."/>
            <person name="Abril J.F."/>
            <person name="Guigo R."/>
            <person name="Kumpf K."/>
            <person name="Tunggal B."/>
            <person name="Cox E.C."/>
            <person name="Quail M.A."/>
            <person name="Platzer M."/>
            <person name="Rosenthal A."/>
            <person name="Noegel A.A."/>
        </authorList>
    </citation>
    <scope>NUCLEOTIDE SEQUENCE [LARGE SCALE GENOMIC DNA]</scope>
    <source>
        <strain>AX4</strain>
    </source>
</reference>
<reference key="2">
    <citation type="journal article" date="2005" name="Nature">
        <title>The genome of the social amoeba Dictyostelium discoideum.</title>
        <authorList>
            <person name="Eichinger L."/>
            <person name="Pachebat J.A."/>
            <person name="Gloeckner G."/>
            <person name="Rajandream M.A."/>
            <person name="Sucgang R."/>
            <person name="Berriman M."/>
            <person name="Song J."/>
            <person name="Olsen R."/>
            <person name="Szafranski K."/>
            <person name="Xu Q."/>
            <person name="Tunggal B."/>
            <person name="Kummerfeld S."/>
            <person name="Madera M."/>
            <person name="Konfortov B.A."/>
            <person name="Rivero F."/>
            <person name="Bankier A.T."/>
            <person name="Lehmann R."/>
            <person name="Hamlin N."/>
            <person name="Davies R."/>
            <person name="Gaudet P."/>
            <person name="Fey P."/>
            <person name="Pilcher K."/>
            <person name="Chen G."/>
            <person name="Saunders D."/>
            <person name="Sodergren E.J."/>
            <person name="Davis P."/>
            <person name="Kerhornou A."/>
            <person name="Nie X."/>
            <person name="Hall N."/>
            <person name="Anjard C."/>
            <person name="Hemphill L."/>
            <person name="Bason N."/>
            <person name="Farbrother P."/>
            <person name="Desany B."/>
            <person name="Just E."/>
            <person name="Morio T."/>
            <person name="Rost R."/>
            <person name="Churcher C.M."/>
            <person name="Cooper J."/>
            <person name="Haydock S."/>
            <person name="van Driessche N."/>
            <person name="Cronin A."/>
            <person name="Goodhead I."/>
            <person name="Muzny D.M."/>
            <person name="Mourier T."/>
            <person name="Pain A."/>
            <person name="Lu M."/>
            <person name="Harper D."/>
            <person name="Lindsay R."/>
            <person name="Hauser H."/>
            <person name="James K.D."/>
            <person name="Quiles M."/>
            <person name="Madan Babu M."/>
            <person name="Saito T."/>
            <person name="Buchrieser C."/>
            <person name="Wardroper A."/>
            <person name="Felder M."/>
            <person name="Thangavelu M."/>
            <person name="Johnson D."/>
            <person name="Knights A."/>
            <person name="Loulseged H."/>
            <person name="Mungall K.L."/>
            <person name="Oliver K."/>
            <person name="Price C."/>
            <person name="Quail M.A."/>
            <person name="Urushihara H."/>
            <person name="Hernandez J."/>
            <person name="Rabbinowitsch E."/>
            <person name="Steffen D."/>
            <person name="Sanders M."/>
            <person name="Ma J."/>
            <person name="Kohara Y."/>
            <person name="Sharp S."/>
            <person name="Simmonds M.N."/>
            <person name="Spiegler S."/>
            <person name="Tivey A."/>
            <person name="Sugano S."/>
            <person name="White B."/>
            <person name="Walker D."/>
            <person name="Woodward J.R."/>
            <person name="Winckler T."/>
            <person name="Tanaka Y."/>
            <person name="Shaulsky G."/>
            <person name="Schleicher M."/>
            <person name="Weinstock G.M."/>
            <person name="Rosenthal A."/>
            <person name="Cox E.C."/>
            <person name="Chisholm R.L."/>
            <person name="Gibbs R.A."/>
            <person name="Loomis W.F."/>
            <person name="Platzer M."/>
            <person name="Kay R.R."/>
            <person name="Williams J.G."/>
            <person name="Dear P.H."/>
            <person name="Noegel A.A."/>
            <person name="Barrell B.G."/>
            <person name="Kuspa A."/>
        </authorList>
    </citation>
    <scope>NUCLEOTIDE SEQUENCE [LARGE SCALE GENOMIC DNA]</scope>
    <source>
        <strain>AX4</strain>
    </source>
</reference>
<protein>
    <recommendedName>
        <fullName>Putative uncharacterized protein DDB_G0277057</fullName>
    </recommendedName>
</protein>